<sequence length="356" mass="39862">MELLLQKGANALGQASDSSSILLEAASGGNPDSVTLLLEYGADANVPKNSGHLPIHVAADRGHLLALKTLVPVTDFAAIKRSGISPIHCAAAGAHPKCLELLIQAGFDVNFMLDQRIRKHYDDHRKSALYFAVSNGDLSSVKLLLSAGAMPNQDPVNCLQIALRMGNYELVSLLLRHGANVNYFCRVNPLHFPSALQYTLKDEVMLRMLLNYGYDTELCFDCPHGDKVHRFSASEGWTSTVIKDTMFCEVITLSWLQHLSGKVVRVMLDYVDQVRICSKLKAVLQKQGLWSEIHFILTNPRSLKHLCRLKIRKCMGRLRLRCPVFMSFLPLPSRLKAYVLYKEYDLYEQGIFTGTW</sequence>
<reference key="1">
    <citation type="journal article" date="2005" name="BMC Genomics">
        <title>Characterization of 954 bovine full-CDS cDNA sequences.</title>
        <authorList>
            <person name="Harhay G.P."/>
            <person name="Sonstegard T.S."/>
            <person name="Keele J.W."/>
            <person name="Heaton M.P."/>
            <person name="Clawson M.L."/>
            <person name="Snelling W.M."/>
            <person name="Wiedmann R.T."/>
            <person name="Van Tassell C.P."/>
            <person name="Smith T.P.L."/>
        </authorList>
    </citation>
    <scope>NUCLEOTIDE SEQUENCE [LARGE SCALE MRNA]</scope>
</reference>
<reference key="2">
    <citation type="submission" date="2007-07" db="EMBL/GenBank/DDBJ databases">
        <authorList>
            <consortium name="NIH - Mammalian Gene Collection (MGC) project"/>
        </authorList>
    </citation>
    <scope>NUCLEOTIDE SEQUENCE [LARGE SCALE MRNA]</scope>
    <source>
        <strain>Hereford</strain>
        <tissue>Heart ventricle</tissue>
    </source>
</reference>
<keyword id="KW-0025">Alternative splicing</keyword>
<keyword id="KW-0040">ANK repeat</keyword>
<keyword id="KW-0067">ATP-binding</keyword>
<keyword id="KW-0966">Cell projection</keyword>
<keyword id="KW-0969">Cilium</keyword>
<keyword id="KW-0175">Coiled coil</keyword>
<keyword id="KW-0963">Cytoplasm</keyword>
<keyword id="KW-0206">Cytoskeleton</keyword>
<keyword id="KW-0243">Dynein</keyword>
<keyword id="KW-0493">Microtubule</keyword>
<keyword id="KW-0505">Motor protein</keyword>
<keyword id="KW-0547">Nucleotide-binding</keyword>
<keyword id="KW-1185">Reference proteome</keyword>
<keyword id="KW-0677">Repeat</keyword>
<keyword id="KW-0833">Ubl conjugation pathway</keyword>
<organism>
    <name type="scientific">Bos taurus</name>
    <name type="common">Bovine</name>
    <dbReference type="NCBI Taxonomy" id="9913"/>
    <lineage>
        <taxon>Eukaryota</taxon>
        <taxon>Metazoa</taxon>
        <taxon>Chordata</taxon>
        <taxon>Craniata</taxon>
        <taxon>Vertebrata</taxon>
        <taxon>Euteleostomi</taxon>
        <taxon>Mammalia</taxon>
        <taxon>Eutheria</taxon>
        <taxon>Laurasiatheria</taxon>
        <taxon>Artiodactyla</taxon>
        <taxon>Ruminantia</taxon>
        <taxon>Pecora</taxon>
        <taxon>Bovidae</taxon>
        <taxon>Bovinae</taxon>
        <taxon>Bos</taxon>
    </lineage>
</organism>
<proteinExistence type="evidence at transcript level"/>
<feature type="chain" id="PRO_0000285853" description="Dynein axonemal heavy chain 12">
    <location>
        <begin position="1"/>
        <end position="356"/>
    </location>
</feature>
<feature type="repeat" description="ANK 1">
    <location>
        <begin position="17"/>
        <end position="46"/>
    </location>
</feature>
<feature type="repeat" description="ANK 2">
    <location>
        <begin position="50"/>
        <end position="81"/>
    </location>
</feature>
<feature type="repeat" description="ANK 3">
    <location>
        <begin position="82"/>
        <end position="111"/>
    </location>
</feature>
<feature type="repeat" description="ANK 4">
    <location>
        <begin position="124"/>
        <end position="153"/>
    </location>
</feature>
<feature type="repeat" description="ANK 5">
    <location>
        <begin position="154"/>
        <end position="183"/>
    </location>
</feature>
<feature type="repeat" description="ANK 6">
    <location>
        <begin position="185"/>
        <end position="218"/>
    </location>
</feature>
<feature type="domain" description="SOCS box" evidence="2">
    <location>
        <begin position="290"/>
        <end position="345"/>
    </location>
</feature>
<gene>
    <name type="primary">DNAH12</name>
    <name type="synonym">ASB14</name>
</gene>
<protein>
    <recommendedName>
        <fullName>Dynein axonemal heavy chain 12</fullName>
    </recommendedName>
    <alternativeName>
        <fullName>Ankyrin repeat and SOCS box protein 14</fullName>
        <shortName>ASB-14</shortName>
    </alternativeName>
    <alternativeName>
        <fullName>Axonemal beta dynein heavy chain 12</fullName>
    </alternativeName>
    <alternativeName>
        <fullName>Ciliary dynein heavy chain 12</fullName>
    </alternativeName>
</protein>
<dbReference type="EMBL" id="BT021867">
    <property type="protein sequence ID" value="AAX46714.1"/>
    <property type="molecule type" value="mRNA"/>
</dbReference>
<dbReference type="EMBL" id="BC148874">
    <property type="protein sequence ID" value="AAI48875.1"/>
    <property type="molecule type" value="mRNA"/>
</dbReference>
<dbReference type="RefSeq" id="NP_001030242.2">
    <property type="nucleotide sequence ID" value="NM_001035070.2"/>
</dbReference>
<dbReference type="SMR" id="Q58CT0"/>
<dbReference type="STRING" id="9913.ENSBTAP00000021315"/>
<dbReference type="PaxDb" id="9913-ENSBTAP00000021315"/>
<dbReference type="GeneID" id="509431"/>
<dbReference type="KEGG" id="bta:509431"/>
<dbReference type="CTD" id="142686"/>
<dbReference type="eggNOG" id="KOG0504">
    <property type="taxonomic scope" value="Eukaryota"/>
</dbReference>
<dbReference type="HOGENOM" id="CLU_023739_1_0_1"/>
<dbReference type="InParanoid" id="Q58CT0"/>
<dbReference type="OrthoDB" id="194358at2759"/>
<dbReference type="UniPathway" id="UPA00143"/>
<dbReference type="Proteomes" id="UP000009136">
    <property type="component" value="Unplaced"/>
</dbReference>
<dbReference type="GO" id="GO:0005929">
    <property type="term" value="C:cilium"/>
    <property type="evidence" value="ECO:0007669"/>
    <property type="project" value="UniProtKB-KW"/>
</dbReference>
<dbReference type="GO" id="GO:0005737">
    <property type="term" value="C:cytoplasm"/>
    <property type="evidence" value="ECO:0007669"/>
    <property type="project" value="UniProtKB-KW"/>
</dbReference>
<dbReference type="GO" id="GO:0030286">
    <property type="term" value="C:dynein complex"/>
    <property type="evidence" value="ECO:0007669"/>
    <property type="project" value="UniProtKB-KW"/>
</dbReference>
<dbReference type="GO" id="GO:0005874">
    <property type="term" value="C:microtubule"/>
    <property type="evidence" value="ECO:0007669"/>
    <property type="project" value="UniProtKB-KW"/>
</dbReference>
<dbReference type="GO" id="GO:0005524">
    <property type="term" value="F:ATP binding"/>
    <property type="evidence" value="ECO:0007669"/>
    <property type="project" value="UniProtKB-KW"/>
</dbReference>
<dbReference type="GO" id="GO:0035556">
    <property type="term" value="P:intracellular signal transduction"/>
    <property type="evidence" value="ECO:0007669"/>
    <property type="project" value="InterPro"/>
</dbReference>
<dbReference type="GO" id="GO:0016567">
    <property type="term" value="P:protein ubiquitination"/>
    <property type="evidence" value="ECO:0007669"/>
    <property type="project" value="UniProtKB-UniPathway"/>
</dbReference>
<dbReference type="CDD" id="cd03730">
    <property type="entry name" value="SOCS_ASB14"/>
    <property type="match status" value="1"/>
</dbReference>
<dbReference type="FunFam" id="1.10.750.20:FF:000001">
    <property type="entry name" value="Ankyrin repeat and SOCS box containing 1"/>
    <property type="match status" value="1"/>
</dbReference>
<dbReference type="FunFam" id="1.25.40.20:FF:000267">
    <property type="entry name" value="Ankyrin repeat and SOCS box containing 14"/>
    <property type="match status" value="1"/>
</dbReference>
<dbReference type="Gene3D" id="1.25.40.20">
    <property type="entry name" value="Ankyrin repeat-containing domain"/>
    <property type="match status" value="1"/>
</dbReference>
<dbReference type="Gene3D" id="1.10.750.20">
    <property type="entry name" value="SOCS box"/>
    <property type="match status" value="1"/>
</dbReference>
<dbReference type="InterPro" id="IPR002110">
    <property type="entry name" value="Ankyrin_rpt"/>
</dbReference>
<dbReference type="InterPro" id="IPR036770">
    <property type="entry name" value="Ankyrin_rpt-contain_sf"/>
</dbReference>
<dbReference type="InterPro" id="IPR001496">
    <property type="entry name" value="SOCS_box"/>
</dbReference>
<dbReference type="InterPro" id="IPR036036">
    <property type="entry name" value="SOCS_box-like_dom_sf"/>
</dbReference>
<dbReference type="PANTHER" id="PTHR24198">
    <property type="entry name" value="ANKYRIN REPEAT AND PROTEIN KINASE DOMAIN-CONTAINING PROTEIN"/>
    <property type="match status" value="1"/>
</dbReference>
<dbReference type="PANTHER" id="PTHR24198:SF176">
    <property type="entry name" value="ANKYRIN REPEAT AND SOCS BOX CONTAINING 14"/>
    <property type="match status" value="1"/>
</dbReference>
<dbReference type="Pfam" id="PF12796">
    <property type="entry name" value="Ank_2"/>
    <property type="match status" value="2"/>
</dbReference>
<dbReference type="Pfam" id="PF07525">
    <property type="entry name" value="SOCS_box"/>
    <property type="match status" value="1"/>
</dbReference>
<dbReference type="SMART" id="SM00248">
    <property type="entry name" value="ANK"/>
    <property type="match status" value="6"/>
</dbReference>
<dbReference type="SMART" id="SM00253">
    <property type="entry name" value="SOCS"/>
    <property type="match status" value="1"/>
</dbReference>
<dbReference type="SMART" id="SM00969">
    <property type="entry name" value="SOCS_box"/>
    <property type="match status" value="1"/>
</dbReference>
<dbReference type="SUPFAM" id="SSF48403">
    <property type="entry name" value="Ankyrin repeat"/>
    <property type="match status" value="1"/>
</dbReference>
<dbReference type="SUPFAM" id="SSF158235">
    <property type="entry name" value="SOCS box-like"/>
    <property type="match status" value="1"/>
</dbReference>
<dbReference type="PROSITE" id="PS50297">
    <property type="entry name" value="ANK_REP_REGION"/>
    <property type="match status" value="1"/>
</dbReference>
<dbReference type="PROSITE" id="PS50088">
    <property type="entry name" value="ANK_REPEAT"/>
    <property type="match status" value="4"/>
</dbReference>
<dbReference type="PROSITE" id="PS50225">
    <property type="entry name" value="SOCS"/>
    <property type="match status" value="1"/>
</dbReference>
<comment type="function">
    <text evidence="1">Force generating protein of respiratory cilia. Produces force towards the minus ends of microtubules. Dynein has ATPase activity; the force-producing power stroke is thought to occur on release of ADP. Involved in sperm motility; implicated in sperm flagellar assembly (By similarity).</text>
</comment>
<comment type="function">
    <text evidence="1">May be a substrate-recognition component of a SCF-like ECS (Elongin-Cullin-SOCS-box protein) E3 ubiquitin-protein ligase complex which mediates the ubiquitination and subsequent proteasomal degradation of target proteins.</text>
</comment>
<comment type="pathway">
    <text>Protein modification; protein ubiquitination.</text>
</comment>
<comment type="subunit">
    <text>Consists of at least two heavy chains and a number of intermediate and light chains.</text>
</comment>
<comment type="subcellular location">
    <subcellularLocation>
        <location evidence="3">Cytoplasm</location>
        <location evidence="3">Cytoskeleton</location>
        <location evidence="3">Cilium axoneme</location>
    </subcellularLocation>
</comment>
<comment type="alternative products">
    <event type="alternative splicing"/>
    <isoform>
        <id>Q58CT0-1</id>
        <name>1</name>
        <sequence type="displayed"/>
    </isoform>
    <text>A number of isoforms are produced.</text>
</comment>
<comment type="domain">
    <text evidence="1">Dynein heavy chains probably consist of an N-terminal stem (which binds cargo and interacts with other dynein components), and the head or motor domain. The motor contains six tandemly-linked AAA domains in the head, which form a ring. A stalk-like structure (formed by two of the coiled coil domains) protrudes between AAA 4 and AAA 5 and terminates in a microtubule-binding site. A seventh domain may also contribute to this ring; it is not clear whether the N-terminus or the C-terminus forms this extra domain. There are four well-conserved and two non-conserved ATPase sites, one per AAA domain. Probably only one of these (within AAA 1) actually hydrolyzes ATP, the others may serve a regulatory function (By similarity).</text>
</comment>
<comment type="domain">
    <text evidence="1">The SOCS box domain mediates the interaction with the Elongin BC complex, an adapter module in different E3 ubiquitin-protein ligase complexes.</text>
</comment>
<comment type="similarity">
    <text evidence="3">Belongs to the dynein heavy chain family.</text>
</comment>
<accession>Q58CT0</accession>
<accession>A6QNK5</accession>
<evidence type="ECO:0000250" key="1"/>
<evidence type="ECO:0000255" key="2">
    <source>
        <dbReference type="PROSITE-ProRule" id="PRU00194"/>
    </source>
</evidence>
<evidence type="ECO:0000305" key="3"/>
<name>DYH12_BOVIN</name>